<comment type="function">
    <text evidence="1">Together with its co-chaperonin GroES, plays an essential role in assisting protein folding. The GroEL-GroES system forms a nano-cage that allows encapsulation of the non-native substrate proteins and provides a physical environment optimized to promote and accelerate protein folding.</text>
</comment>
<comment type="catalytic activity">
    <reaction evidence="1">
        <text>ATP + H2O + a folded polypeptide = ADP + phosphate + an unfolded polypeptide.</text>
        <dbReference type="EC" id="5.6.1.7"/>
    </reaction>
</comment>
<comment type="subunit">
    <text evidence="1">Forms a cylinder of 14 subunits composed of two heptameric rings stacked back-to-back. Interacts with the co-chaperonin GroES.</text>
</comment>
<comment type="subcellular location">
    <subcellularLocation>
        <location evidence="1">Cytoplasm</location>
    </subcellularLocation>
</comment>
<comment type="similarity">
    <text evidence="1">Belongs to the chaperonin (HSP60) family.</text>
</comment>
<dbReference type="EC" id="5.6.1.7" evidence="1"/>
<dbReference type="EMBL" id="CP000237">
    <property type="protein sequence ID" value="ABD45887.1"/>
    <property type="molecule type" value="Genomic_DNA"/>
</dbReference>
<dbReference type="RefSeq" id="WP_011452026.1">
    <property type="nucleotide sequence ID" value="NC_007798.1"/>
</dbReference>
<dbReference type="SMR" id="Q2GDC6"/>
<dbReference type="STRING" id="222891.NSE_0642"/>
<dbReference type="KEGG" id="nse:NSE_0642"/>
<dbReference type="eggNOG" id="COG0459">
    <property type="taxonomic scope" value="Bacteria"/>
</dbReference>
<dbReference type="HOGENOM" id="CLU_016503_3_0_5"/>
<dbReference type="OrthoDB" id="9766614at2"/>
<dbReference type="Proteomes" id="UP000001942">
    <property type="component" value="Chromosome"/>
</dbReference>
<dbReference type="GO" id="GO:0005737">
    <property type="term" value="C:cytoplasm"/>
    <property type="evidence" value="ECO:0007669"/>
    <property type="project" value="UniProtKB-SubCell"/>
</dbReference>
<dbReference type="GO" id="GO:0005524">
    <property type="term" value="F:ATP binding"/>
    <property type="evidence" value="ECO:0007669"/>
    <property type="project" value="UniProtKB-UniRule"/>
</dbReference>
<dbReference type="GO" id="GO:0140662">
    <property type="term" value="F:ATP-dependent protein folding chaperone"/>
    <property type="evidence" value="ECO:0007669"/>
    <property type="project" value="InterPro"/>
</dbReference>
<dbReference type="GO" id="GO:0016853">
    <property type="term" value="F:isomerase activity"/>
    <property type="evidence" value="ECO:0007669"/>
    <property type="project" value="UniProtKB-KW"/>
</dbReference>
<dbReference type="GO" id="GO:0051082">
    <property type="term" value="F:unfolded protein binding"/>
    <property type="evidence" value="ECO:0007669"/>
    <property type="project" value="UniProtKB-UniRule"/>
</dbReference>
<dbReference type="GO" id="GO:0042026">
    <property type="term" value="P:protein refolding"/>
    <property type="evidence" value="ECO:0007669"/>
    <property type="project" value="UniProtKB-UniRule"/>
</dbReference>
<dbReference type="CDD" id="cd03344">
    <property type="entry name" value="GroEL"/>
    <property type="match status" value="1"/>
</dbReference>
<dbReference type="FunFam" id="3.50.7.10:FF:000001">
    <property type="entry name" value="60 kDa chaperonin"/>
    <property type="match status" value="1"/>
</dbReference>
<dbReference type="Gene3D" id="3.50.7.10">
    <property type="entry name" value="GroEL"/>
    <property type="match status" value="1"/>
</dbReference>
<dbReference type="Gene3D" id="1.10.560.10">
    <property type="entry name" value="GroEL-like equatorial domain"/>
    <property type="match status" value="1"/>
</dbReference>
<dbReference type="Gene3D" id="3.30.260.10">
    <property type="entry name" value="TCP-1-like chaperonin intermediate domain"/>
    <property type="match status" value="1"/>
</dbReference>
<dbReference type="HAMAP" id="MF_00600">
    <property type="entry name" value="CH60"/>
    <property type="match status" value="1"/>
</dbReference>
<dbReference type="InterPro" id="IPR018370">
    <property type="entry name" value="Chaperonin_Cpn60_CS"/>
</dbReference>
<dbReference type="InterPro" id="IPR001844">
    <property type="entry name" value="Cpn60/GroEL"/>
</dbReference>
<dbReference type="InterPro" id="IPR002423">
    <property type="entry name" value="Cpn60/GroEL/TCP-1"/>
</dbReference>
<dbReference type="InterPro" id="IPR027409">
    <property type="entry name" value="GroEL-like_apical_dom_sf"/>
</dbReference>
<dbReference type="InterPro" id="IPR027413">
    <property type="entry name" value="GROEL-like_equatorial_sf"/>
</dbReference>
<dbReference type="InterPro" id="IPR027410">
    <property type="entry name" value="TCP-1-like_intermed_sf"/>
</dbReference>
<dbReference type="NCBIfam" id="TIGR02348">
    <property type="entry name" value="GroEL"/>
    <property type="match status" value="1"/>
</dbReference>
<dbReference type="NCBIfam" id="NF000592">
    <property type="entry name" value="PRK00013.1"/>
    <property type="match status" value="1"/>
</dbReference>
<dbReference type="NCBIfam" id="NF009487">
    <property type="entry name" value="PRK12849.1"/>
    <property type="match status" value="1"/>
</dbReference>
<dbReference type="NCBIfam" id="NF009488">
    <property type="entry name" value="PRK12850.1"/>
    <property type="match status" value="1"/>
</dbReference>
<dbReference type="NCBIfam" id="NF009489">
    <property type="entry name" value="PRK12851.1"/>
    <property type="match status" value="1"/>
</dbReference>
<dbReference type="PANTHER" id="PTHR45633">
    <property type="entry name" value="60 KDA HEAT SHOCK PROTEIN, MITOCHONDRIAL"/>
    <property type="match status" value="1"/>
</dbReference>
<dbReference type="Pfam" id="PF00118">
    <property type="entry name" value="Cpn60_TCP1"/>
    <property type="match status" value="1"/>
</dbReference>
<dbReference type="PRINTS" id="PR00298">
    <property type="entry name" value="CHAPERONIN60"/>
</dbReference>
<dbReference type="SUPFAM" id="SSF52029">
    <property type="entry name" value="GroEL apical domain-like"/>
    <property type="match status" value="1"/>
</dbReference>
<dbReference type="SUPFAM" id="SSF48592">
    <property type="entry name" value="GroEL equatorial domain-like"/>
    <property type="match status" value="1"/>
</dbReference>
<dbReference type="SUPFAM" id="SSF54849">
    <property type="entry name" value="GroEL-intermediate domain like"/>
    <property type="match status" value="1"/>
</dbReference>
<dbReference type="PROSITE" id="PS00296">
    <property type="entry name" value="CHAPERONINS_CPN60"/>
    <property type="match status" value="1"/>
</dbReference>
<keyword id="KW-0067">ATP-binding</keyword>
<keyword id="KW-0143">Chaperone</keyword>
<keyword id="KW-0963">Cytoplasm</keyword>
<keyword id="KW-0413">Isomerase</keyword>
<keyword id="KW-0547">Nucleotide-binding</keyword>
<feature type="chain" id="PRO_0000256932" description="Chaperonin GroEL">
    <location>
        <begin position="1"/>
        <end position="548"/>
    </location>
</feature>
<feature type="binding site" evidence="1">
    <location>
        <begin position="29"/>
        <end position="32"/>
    </location>
    <ligand>
        <name>ATP</name>
        <dbReference type="ChEBI" id="CHEBI:30616"/>
    </ligand>
</feature>
<feature type="binding site" evidence="1">
    <location>
        <position position="50"/>
    </location>
    <ligand>
        <name>ATP</name>
        <dbReference type="ChEBI" id="CHEBI:30616"/>
    </ligand>
</feature>
<feature type="binding site" evidence="1">
    <location>
        <begin position="86"/>
        <end position="90"/>
    </location>
    <ligand>
        <name>ATP</name>
        <dbReference type="ChEBI" id="CHEBI:30616"/>
    </ligand>
</feature>
<feature type="binding site" evidence="1">
    <location>
        <position position="416"/>
    </location>
    <ligand>
        <name>ATP</name>
        <dbReference type="ChEBI" id="CHEBI:30616"/>
    </ligand>
</feature>
<feature type="binding site" evidence="1">
    <location>
        <position position="497"/>
    </location>
    <ligand>
        <name>ATP</name>
        <dbReference type="ChEBI" id="CHEBI:30616"/>
    </ligand>
</feature>
<gene>
    <name evidence="1" type="primary">groEL</name>
    <name evidence="1" type="synonym">groL</name>
    <name type="ordered locus">NSE_0642</name>
</gene>
<sequence>MANEVISGEQLQRVIRDAADLVVSSAGVTLGPEGRPVIMSKSYGGPEVTKDGYKVMNQLKPEDEKVAKIVELLNQATSQANEKAGDGTTTATILVGNMIKNAHKHIAAQRSRMKLKSGMKRARDEVVKYIQSVAKKINSEEEIAQVGSISANGNSEIGGKIAEAMNKVGKEGVITVEEGKGLDEFSVSVVQGMVFDRGYVSPYFITNPEKMIVEFDNPYVLLANKKLSSIQPMVPLLETIVRSNRAVVIIAEDVEGEALTSLVLSKMRGSLKACAVKAPGFGDRRSEMLEDIRILTGAKTLVSDDLGVTVESLTVEDLGTAKSIIISKDSTTIVDGGGEKTAIEARVKQIKTQIDKTTSDYDKEKLQERLAKLAGGVAVLKVGGATEVEVKERKDRVEDALHATRAAVEEGIVPGGGATLLSAIAVLEKLSSDDDDEQAGINIVKTALKAPISQIVENAGEDASVITYNLLESKDPNRIFDARELKYVDAFKAGIIDPAKVVRVALESAVSVASVLVTTEALIVDLPTKDNGSSSMMPGGGMGGMGGF</sequence>
<protein>
    <recommendedName>
        <fullName evidence="1">Chaperonin GroEL</fullName>
        <ecNumber evidence="1">5.6.1.7</ecNumber>
    </recommendedName>
    <alternativeName>
        <fullName evidence="1">60 kDa chaperonin</fullName>
    </alternativeName>
    <alternativeName>
        <fullName evidence="1">Chaperonin-60</fullName>
        <shortName evidence="1">Cpn60</shortName>
    </alternativeName>
</protein>
<evidence type="ECO:0000255" key="1">
    <source>
        <dbReference type="HAMAP-Rule" id="MF_00600"/>
    </source>
</evidence>
<reference key="1">
    <citation type="journal article" date="2006" name="PLoS Genet.">
        <title>Comparative genomics of emerging human ehrlichiosis agents.</title>
        <authorList>
            <person name="Dunning Hotopp J.C."/>
            <person name="Lin M."/>
            <person name="Madupu R."/>
            <person name="Crabtree J."/>
            <person name="Angiuoli S.V."/>
            <person name="Eisen J.A."/>
            <person name="Seshadri R."/>
            <person name="Ren Q."/>
            <person name="Wu M."/>
            <person name="Utterback T.R."/>
            <person name="Smith S."/>
            <person name="Lewis M."/>
            <person name="Khouri H."/>
            <person name="Zhang C."/>
            <person name="Niu H."/>
            <person name="Lin Q."/>
            <person name="Ohashi N."/>
            <person name="Zhi N."/>
            <person name="Nelson W.C."/>
            <person name="Brinkac L.M."/>
            <person name="Dodson R.J."/>
            <person name="Rosovitz M.J."/>
            <person name="Sundaram J.P."/>
            <person name="Daugherty S.C."/>
            <person name="Davidsen T."/>
            <person name="Durkin A.S."/>
            <person name="Gwinn M.L."/>
            <person name="Haft D.H."/>
            <person name="Selengut J.D."/>
            <person name="Sullivan S.A."/>
            <person name="Zafar N."/>
            <person name="Zhou L."/>
            <person name="Benahmed F."/>
            <person name="Forberger H."/>
            <person name="Halpin R."/>
            <person name="Mulligan S."/>
            <person name="Robinson J."/>
            <person name="White O."/>
            <person name="Rikihisa Y."/>
            <person name="Tettelin H."/>
        </authorList>
    </citation>
    <scope>NUCLEOTIDE SEQUENCE [LARGE SCALE GENOMIC DNA]</scope>
    <source>
        <strain>ATCC VR-367 / Miyayama</strain>
    </source>
</reference>
<proteinExistence type="inferred from homology"/>
<name>CH60_NEOSM</name>
<accession>Q2GDC6</accession>
<organism>
    <name type="scientific">Neorickettsia sennetsu (strain ATCC VR-367 / Miyayama)</name>
    <name type="common">Ehrlichia sennetsu</name>
    <dbReference type="NCBI Taxonomy" id="222891"/>
    <lineage>
        <taxon>Bacteria</taxon>
        <taxon>Pseudomonadati</taxon>
        <taxon>Pseudomonadota</taxon>
        <taxon>Alphaproteobacteria</taxon>
        <taxon>Rickettsiales</taxon>
        <taxon>Anaplasmataceae</taxon>
        <taxon>Neorickettsia</taxon>
    </lineage>
</organism>